<organism>
    <name type="scientific">Helicobacter pylori (strain J99 / ATCC 700824)</name>
    <name type="common">Campylobacter pylori J99</name>
    <dbReference type="NCBI Taxonomy" id="85963"/>
    <lineage>
        <taxon>Bacteria</taxon>
        <taxon>Pseudomonadati</taxon>
        <taxon>Campylobacterota</taxon>
        <taxon>Epsilonproteobacteria</taxon>
        <taxon>Campylobacterales</taxon>
        <taxon>Helicobacteraceae</taxon>
        <taxon>Helicobacter</taxon>
    </lineage>
</organism>
<keyword id="KW-0378">Hydrolase</keyword>
<keyword id="KW-0441">Lipid A biosynthesis</keyword>
<keyword id="KW-0444">Lipid biosynthesis</keyword>
<keyword id="KW-0443">Lipid metabolism</keyword>
<keyword id="KW-0479">Metal-binding</keyword>
<keyword id="KW-0862">Zinc</keyword>
<reference key="1">
    <citation type="journal article" date="1999" name="Nature">
        <title>Genomic sequence comparison of two unrelated isolates of the human gastric pathogen Helicobacter pylori.</title>
        <authorList>
            <person name="Alm R.A."/>
            <person name="Ling L.-S.L."/>
            <person name="Moir D.T."/>
            <person name="King B.L."/>
            <person name="Brown E.D."/>
            <person name="Doig P.C."/>
            <person name="Smith D.R."/>
            <person name="Noonan B."/>
            <person name="Guild B.C."/>
            <person name="deJonge B.L."/>
            <person name="Carmel G."/>
            <person name="Tummino P.J."/>
            <person name="Caruso A."/>
            <person name="Uria-Nickelsen M."/>
            <person name="Mills D.M."/>
            <person name="Ives C."/>
            <person name="Gibson R."/>
            <person name="Merberg D."/>
            <person name="Mills S.D."/>
            <person name="Jiang Q."/>
            <person name="Taylor D.E."/>
            <person name="Vovis G.F."/>
            <person name="Trust T.J."/>
        </authorList>
    </citation>
    <scope>NUCLEOTIDE SEQUENCE [LARGE SCALE GENOMIC DNA]</scope>
    <source>
        <strain>J99 / ATCC 700824</strain>
    </source>
</reference>
<gene>
    <name evidence="1" type="primary">lpxC</name>
    <name type="ordered locus">jhp_0373</name>
</gene>
<protein>
    <recommendedName>
        <fullName evidence="1">UDP-3-O-acyl-N-acetylglucosamine deacetylase</fullName>
        <shortName evidence="1">UDP-3-O-acyl-GlcNAc deacetylase</shortName>
        <ecNumber evidence="1">3.5.1.108</ecNumber>
    </recommendedName>
    <alternativeName>
        <fullName evidence="1">UDP-3-O-[R-3-hydroxymyristoyl]-N-acetylglucosamine deacetylase</fullName>
    </alternativeName>
</protein>
<dbReference type="EC" id="3.5.1.108" evidence="1"/>
<dbReference type="EMBL" id="AE001439">
    <property type="protein sequence ID" value="AAD05952.1"/>
    <property type="molecule type" value="Genomic_DNA"/>
</dbReference>
<dbReference type="PIR" id="A71940">
    <property type="entry name" value="A71940"/>
</dbReference>
<dbReference type="RefSeq" id="WP_000815198.1">
    <property type="nucleotide sequence ID" value="NZ_CP011330.1"/>
</dbReference>
<dbReference type="SMR" id="Q9ZM50"/>
<dbReference type="KEGG" id="hpj:jhp_0373"/>
<dbReference type="PATRIC" id="fig|85963.30.peg.638"/>
<dbReference type="eggNOG" id="COG0774">
    <property type="taxonomic scope" value="Bacteria"/>
</dbReference>
<dbReference type="UniPathway" id="UPA00359">
    <property type="reaction ID" value="UER00478"/>
</dbReference>
<dbReference type="Proteomes" id="UP000000804">
    <property type="component" value="Chromosome"/>
</dbReference>
<dbReference type="GO" id="GO:0016020">
    <property type="term" value="C:membrane"/>
    <property type="evidence" value="ECO:0007669"/>
    <property type="project" value="GOC"/>
</dbReference>
<dbReference type="GO" id="GO:0046872">
    <property type="term" value="F:metal ion binding"/>
    <property type="evidence" value="ECO:0007669"/>
    <property type="project" value="UniProtKB-KW"/>
</dbReference>
<dbReference type="GO" id="GO:0103117">
    <property type="term" value="F:UDP-3-O-acyl-N-acetylglucosamine deacetylase activity"/>
    <property type="evidence" value="ECO:0007669"/>
    <property type="project" value="UniProtKB-UniRule"/>
</dbReference>
<dbReference type="GO" id="GO:0009245">
    <property type="term" value="P:lipid A biosynthetic process"/>
    <property type="evidence" value="ECO:0007669"/>
    <property type="project" value="UniProtKB-UniRule"/>
</dbReference>
<dbReference type="Gene3D" id="3.30.230.20">
    <property type="entry name" value="lpxc deacetylase, domain 1"/>
    <property type="match status" value="1"/>
</dbReference>
<dbReference type="Gene3D" id="3.30.1700.10">
    <property type="entry name" value="lpxc deacetylase, domain 2"/>
    <property type="match status" value="1"/>
</dbReference>
<dbReference type="HAMAP" id="MF_00388">
    <property type="entry name" value="LpxC"/>
    <property type="match status" value="1"/>
</dbReference>
<dbReference type="InterPro" id="IPR020568">
    <property type="entry name" value="Ribosomal_Su5_D2-typ_SF"/>
</dbReference>
<dbReference type="InterPro" id="IPR004463">
    <property type="entry name" value="UDP-acyl_GlcNac_deAcase"/>
</dbReference>
<dbReference type="InterPro" id="IPR011334">
    <property type="entry name" value="UDP-acyl_GlcNac_deAcase_C"/>
</dbReference>
<dbReference type="InterPro" id="IPR015870">
    <property type="entry name" value="UDP-acyl_N-AcGlcN_deAcase_N"/>
</dbReference>
<dbReference type="NCBIfam" id="TIGR00325">
    <property type="entry name" value="lpxC"/>
    <property type="match status" value="1"/>
</dbReference>
<dbReference type="PANTHER" id="PTHR33694">
    <property type="entry name" value="UDP-3-O-ACYL-N-ACETYLGLUCOSAMINE DEACETYLASE 1, MITOCHONDRIAL-RELATED"/>
    <property type="match status" value="1"/>
</dbReference>
<dbReference type="PANTHER" id="PTHR33694:SF1">
    <property type="entry name" value="UDP-3-O-ACYL-N-ACETYLGLUCOSAMINE DEACETYLASE 1, MITOCHONDRIAL-RELATED"/>
    <property type="match status" value="1"/>
</dbReference>
<dbReference type="Pfam" id="PF03331">
    <property type="entry name" value="LpxC"/>
    <property type="match status" value="1"/>
</dbReference>
<dbReference type="SUPFAM" id="SSF54211">
    <property type="entry name" value="Ribosomal protein S5 domain 2-like"/>
    <property type="match status" value="2"/>
</dbReference>
<comment type="function">
    <text evidence="1">Catalyzes the hydrolysis of UDP-3-O-myristoyl-N-acetylglucosamine to form UDP-3-O-myristoylglucosamine and acetate, the committed step in lipid A biosynthesis.</text>
</comment>
<comment type="catalytic activity">
    <reaction evidence="1">
        <text>a UDP-3-O-[(3R)-3-hydroxyacyl]-N-acetyl-alpha-D-glucosamine + H2O = a UDP-3-O-[(3R)-3-hydroxyacyl]-alpha-D-glucosamine + acetate</text>
        <dbReference type="Rhea" id="RHEA:67816"/>
        <dbReference type="ChEBI" id="CHEBI:15377"/>
        <dbReference type="ChEBI" id="CHEBI:30089"/>
        <dbReference type="ChEBI" id="CHEBI:137740"/>
        <dbReference type="ChEBI" id="CHEBI:173225"/>
        <dbReference type="EC" id="3.5.1.108"/>
    </reaction>
</comment>
<comment type="cofactor">
    <cofactor evidence="1">
        <name>Zn(2+)</name>
        <dbReference type="ChEBI" id="CHEBI:29105"/>
    </cofactor>
</comment>
<comment type="pathway">
    <text evidence="1">Glycolipid biosynthesis; lipid IV(A) biosynthesis; lipid IV(A) from (3R)-3-hydroxytetradecanoyl-[acyl-carrier-protein] and UDP-N-acetyl-alpha-D-glucosamine: step 2/6.</text>
</comment>
<comment type="similarity">
    <text evidence="1">Belongs to the LpxC family.</text>
</comment>
<feature type="chain" id="PRO_0000191936" description="UDP-3-O-acyl-N-acetylglucosamine deacetylase">
    <location>
        <begin position="1"/>
        <end position="295"/>
    </location>
</feature>
<feature type="active site" description="Proton donor" evidence="1">
    <location>
        <position position="259"/>
    </location>
</feature>
<feature type="binding site" evidence="1">
    <location>
        <position position="75"/>
    </location>
    <ligand>
        <name>Zn(2+)</name>
        <dbReference type="ChEBI" id="CHEBI:29105"/>
    </ligand>
</feature>
<feature type="binding site" evidence="1">
    <location>
        <position position="232"/>
    </location>
    <ligand>
        <name>Zn(2+)</name>
        <dbReference type="ChEBI" id="CHEBI:29105"/>
    </ligand>
</feature>
<feature type="binding site" evidence="1">
    <location>
        <position position="236"/>
    </location>
    <ligand>
        <name>Zn(2+)</name>
        <dbReference type="ChEBI" id="CHEBI:29105"/>
    </ligand>
</feature>
<name>LPXC_HELPJ</name>
<proteinExistence type="inferred from homology"/>
<sequence>MKQTTINHSVELVGIGLHKGVPVKLVLEPLEENQGIVFYRSDLGVKLPLKPENIVDTKMATVLGKDNARISTIEHLLSAVHAYGIDNLKISVDNEEIPIMDGSALTYCMLLDEAGIKELDAPKKVMEIKQAVEVREGDKFVKIEPDSQLSLNFTIDFNHPVIAKQAHHFVFSKTAYKEQVAKARTFGFLQEVNYLRSIGLAKGGSLNNCIVLDENSILNKEGLRCEKEFVCHKILDAMGDLMVLGMPVMGKYTSFSGSHKLNSMLVKAILADAKNYEVLIASDPAKEFALQKAFA</sequence>
<evidence type="ECO:0000255" key="1">
    <source>
        <dbReference type="HAMAP-Rule" id="MF_00388"/>
    </source>
</evidence>
<accession>Q9ZM50</accession>